<dbReference type="EC" id="3.4.24.-" evidence="1"/>
<dbReference type="EMBL" id="CP000155">
    <property type="protein sequence ID" value="ABC30761.1"/>
    <property type="molecule type" value="Genomic_DNA"/>
</dbReference>
<dbReference type="RefSeq" id="WP_011397828.1">
    <property type="nucleotide sequence ID" value="NC_007645.1"/>
</dbReference>
<dbReference type="SMR" id="Q2SF13"/>
<dbReference type="STRING" id="349521.HCH_04046"/>
<dbReference type="KEGG" id="hch:HCH_04046"/>
<dbReference type="eggNOG" id="COG0465">
    <property type="taxonomic scope" value="Bacteria"/>
</dbReference>
<dbReference type="HOGENOM" id="CLU_000688_16_1_6"/>
<dbReference type="OrthoDB" id="9809379at2"/>
<dbReference type="Proteomes" id="UP000000238">
    <property type="component" value="Chromosome"/>
</dbReference>
<dbReference type="GO" id="GO:0005886">
    <property type="term" value="C:plasma membrane"/>
    <property type="evidence" value="ECO:0007669"/>
    <property type="project" value="UniProtKB-SubCell"/>
</dbReference>
<dbReference type="GO" id="GO:0005524">
    <property type="term" value="F:ATP binding"/>
    <property type="evidence" value="ECO:0007669"/>
    <property type="project" value="UniProtKB-UniRule"/>
</dbReference>
<dbReference type="GO" id="GO:0016887">
    <property type="term" value="F:ATP hydrolysis activity"/>
    <property type="evidence" value="ECO:0007669"/>
    <property type="project" value="UniProtKB-UniRule"/>
</dbReference>
<dbReference type="GO" id="GO:0004176">
    <property type="term" value="F:ATP-dependent peptidase activity"/>
    <property type="evidence" value="ECO:0007669"/>
    <property type="project" value="InterPro"/>
</dbReference>
<dbReference type="GO" id="GO:0004222">
    <property type="term" value="F:metalloendopeptidase activity"/>
    <property type="evidence" value="ECO:0007669"/>
    <property type="project" value="InterPro"/>
</dbReference>
<dbReference type="GO" id="GO:0008270">
    <property type="term" value="F:zinc ion binding"/>
    <property type="evidence" value="ECO:0007669"/>
    <property type="project" value="UniProtKB-UniRule"/>
</dbReference>
<dbReference type="GO" id="GO:0030163">
    <property type="term" value="P:protein catabolic process"/>
    <property type="evidence" value="ECO:0007669"/>
    <property type="project" value="UniProtKB-UniRule"/>
</dbReference>
<dbReference type="GO" id="GO:0006508">
    <property type="term" value="P:proteolysis"/>
    <property type="evidence" value="ECO:0007669"/>
    <property type="project" value="UniProtKB-KW"/>
</dbReference>
<dbReference type="CDD" id="cd19501">
    <property type="entry name" value="RecA-like_FtsH"/>
    <property type="match status" value="1"/>
</dbReference>
<dbReference type="FunFam" id="1.10.8.60:FF:000001">
    <property type="entry name" value="ATP-dependent zinc metalloprotease FtsH"/>
    <property type="match status" value="1"/>
</dbReference>
<dbReference type="FunFam" id="1.20.58.760:FF:000001">
    <property type="entry name" value="ATP-dependent zinc metalloprotease FtsH"/>
    <property type="match status" value="1"/>
</dbReference>
<dbReference type="FunFam" id="3.40.50.300:FF:000001">
    <property type="entry name" value="ATP-dependent zinc metalloprotease FtsH"/>
    <property type="match status" value="1"/>
</dbReference>
<dbReference type="Gene3D" id="1.10.8.60">
    <property type="match status" value="1"/>
</dbReference>
<dbReference type="Gene3D" id="3.30.720.210">
    <property type="match status" value="1"/>
</dbReference>
<dbReference type="Gene3D" id="3.40.50.300">
    <property type="entry name" value="P-loop containing nucleotide triphosphate hydrolases"/>
    <property type="match status" value="1"/>
</dbReference>
<dbReference type="Gene3D" id="1.20.58.760">
    <property type="entry name" value="Peptidase M41"/>
    <property type="match status" value="1"/>
</dbReference>
<dbReference type="HAMAP" id="MF_01458">
    <property type="entry name" value="FtsH"/>
    <property type="match status" value="1"/>
</dbReference>
<dbReference type="InterPro" id="IPR003593">
    <property type="entry name" value="AAA+_ATPase"/>
</dbReference>
<dbReference type="InterPro" id="IPR041569">
    <property type="entry name" value="AAA_lid_3"/>
</dbReference>
<dbReference type="InterPro" id="IPR003959">
    <property type="entry name" value="ATPase_AAA_core"/>
</dbReference>
<dbReference type="InterPro" id="IPR003960">
    <property type="entry name" value="ATPase_AAA_CS"/>
</dbReference>
<dbReference type="InterPro" id="IPR005936">
    <property type="entry name" value="FtsH"/>
</dbReference>
<dbReference type="InterPro" id="IPR027417">
    <property type="entry name" value="P-loop_NTPase"/>
</dbReference>
<dbReference type="InterPro" id="IPR011546">
    <property type="entry name" value="Pept_M41_FtsH_extracell"/>
</dbReference>
<dbReference type="InterPro" id="IPR000642">
    <property type="entry name" value="Peptidase_M41"/>
</dbReference>
<dbReference type="InterPro" id="IPR037219">
    <property type="entry name" value="Peptidase_M41-like"/>
</dbReference>
<dbReference type="NCBIfam" id="TIGR01241">
    <property type="entry name" value="FtsH_fam"/>
    <property type="match status" value="1"/>
</dbReference>
<dbReference type="PANTHER" id="PTHR23076:SF97">
    <property type="entry name" value="ATP-DEPENDENT ZINC METALLOPROTEASE YME1L1"/>
    <property type="match status" value="1"/>
</dbReference>
<dbReference type="PANTHER" id="PTHR23076">
    <property type="entry name" value="METALLOPROTEASE M41 FTSH"/>
    <property type="match status" value="1"/>
</dbReference>
<dbReference type="Pfam" id="PF00004">
    <property type="entry name" value="AAA"/>
    <property type="match status" value="1"/>
</dbReference>
<dbReference type="Pfam" id="PF17862">
    <property type="entry name" value="AAA_lid_3"/>
    <property type="match status" value="1"/>
</dbReference>
<dbReference type="Pfam" id="PF06480">
    <property type="entry name" value="FtsH_ext"/>
    <property type="match status" value="1"/>
</dbReference>
<dbReference type="Pfam" id="PF01434">
    <property type="entry name" value="Peptidase_M41"/>
    <property type="match status" value="1"/>
</dbReference>
<dbReference type="SMART" id="SM00382">
    <property type="entry name" value="AAA"/>
    <property type="match status" value="1"/>
</dbReference>
<dbReference type="SUPFAM" id="SSF140990">
    <property type="entry name" value="FtsH protease domain-like"/>
    <property type="match status" value="1"/>
</dbReference>
<dbReference type="SUPFAM" id="SSF52540">
    <property type="entry name" value="P-loop containing nucleoside triphosphate hydrolases"/>
    <property type="match status" value="1"/>
</dbReference>
<dbReference type="PROSITE" id="PS00674">
    <property type="entry name" value="AAA"/>
    <property type="match status" value="1"/>
</dbReference>
<proteinExistence type="inferred from homology"/>
<organism>
    <name type="scientific">Hahella chejuensis (strain KCTC 2396)</name>
    <dbReference type="NCBI Taxonomy" id="349521"/>
    <lineage>
        <taxon>Bacteria</taxon>
        <taxon>Pseudomonadati</taxon>
        <taxon>Pseudomonadota</taxon>
        <taxon>Gammaproteobacteria</taxon>
        <taxon>Oceanospirillales</taxon>
        <taxon>Hahellaceae</taxon>
        <taxon>Hahella</taxon>
    </lineage>
</organism>
<name>FTSH_HAHCH</name>
<comment type="function">
    <text evidence="1">Acts as a processive, ATP-dependent zinc metallopeptidase for both cytoplasmic and membrane proteins. Plays a role in the quality control of integral membrane proteins.</text>
</comment>
<comment type="cofactor">
    <cofactor evidence="1">
        <name>Zn(2+)</name>
        <dbReference type="ChEBI" id="CHEBI:29105"/>
    </cofactor>
    <text evidence="1">Binds 1 zinc ion per subunit.</text>
</comment>
<comment type="subunit">
    <text evidence="1">Homohexamer.</text>
</comment>
<comment type="subcellular location">
    <subcellularLocation>
        <location evidence="1">Cell inner membrane</location>
        <topology evidence="1">Multi-pass membrane protein</topology>
        <orientation evidence="1">Cytoplasmic side</orientation>
    </subcellularLocation>
</comment>
<comment type="similarity">
    <text evidence="1">In the central section; belongs to the AAA ATPase family.</text>
</comment>
<comment type="similarity">
    <text evidence="1">In the C-terminal section; belongs to the peptidase M41 family.</text>
</comment>
<accession>Q2SF13</accession>
<feature type="chain" id="PRO_0000400342" description="ATP-dependent zinc metalloprotease FtsH">
    <location>
        <begin position="1"/>
        <end position="619"/>
    </location>
</feature>
<feature type="topological domain" description="Cytoplasmic" evidence="1">
    <location>
        <begin position="1"/>
        <end position="11"/>
    </location>
</feature>
<feature type="transmembrane region" description="Helical" evidence="1">
    <location>
        <begin position="12"/>
        <end position="32"/>
    </location>
</feature>
<feature type="topological domain" description="Periplasmic" evidence="1">
    <location>
        <begin position="33"/>
        <end position="120"/>
    </location>
</feature>
<feature type="transmembrane region" description="Helical" evidence="1">
    <location>
        <begin position="121"/>
        <end position="141"/>
    </location>
</feature>
<feature type="topological domain" description="Cytoplasmic" evidence="1">
    <location>
        <begin position="142"/>
        <end position="619"/>
    </location>
</feature>
<feature type="active site" evidence="1">
    <location>
        <position position="438"/>
    </location>
</feature>
<feature type="binding site" evidence="1">
    <location>
        <begin position="216"/>
        <end position="223"/>
    </location>
    <ligand>
        <name>ATP</name>
        <dbReference type="ChEBI" id="CHEBI:30616"/>
    </ligand>
</feature>
<feature type="binding site" evidence="1">
    <location>
        <position position="437"/>
    </location>
    <ligand>
        <name>Zn(2+)</name>
        <dbReference type="ChEBI" id="CHEBI:29105"/>
        <note>catalytic</note>
    </ligand>
</feature>
<feature type="binding site" evidence="1">
    <location>
        <position position="441"/>
    </location>
    <ligand>
        <name>Zn(2+)</name>
        <dbReference type="ChEBI" id="CHEBI:29105"/>
        <note>catalytic</note>
    </ligand>
</feature>
<feature type="binding site" evidence="1">
    <location>
        <position position="513"/>
    </location>
    <ligand>
        <name>Zn(2+)</name>
        <dbReference type="ChEBI" id="CHEBI:29105"/>
        <note>catalytic</note>
    </ligand>
</feature>
<gene>
    <name evidence="1" type="primary">ftsH</name>
    <name type="ordered locus">HCH_04046</name>
</gene>
<reference key="1">
    <citation type="journal article" date="2005" name="Nucleic Acids Res.">
        <title>Genomic blueprint of Hahella chejuensis, a marine microbe producing an algicidal agent.</title>
        <authorList>
            <person name="Jeong H."/>
            <person name="Yim J.H."/>
            <person name="Lee C."/>
            <person name="Choi S.-H."/>
            <person name="Park Y.K."/>
            <person name="Yoon S.H."/>
            <person name="Hur C.-G."/>
            <person name="Kang H.-Y."/>
            <person name="Kim D."/>
            <person name="Lee H.H."/>
            <person name="Park K.H."/>
            <person name="Park S.-H."/>
            <person name="Park H.-S."/>
            <person name="Lee H.K."/>
            <person name="Oh T.K."/>
            <person name="Kim J.F."/>
        </authorList>
    </citation>
    <scope>NUCLEOTIDE SEQUENCE [LARGE SCALE GENOMIC DNA]</scope>
    <source>
        <strain>KCTC 2396</strain>
    </source>
</reference>
<evidence type="ECO:0000255" key="1">
    <source>
        <dbReference type="HAMAP-Rule" id="MF_01458"/>
    </source>
</evidence>
<protein>
    <recommendedName>
        <fullName evidence="1">ATP-dependent zinc metalloprotease FtsH</fullName>
        <ecNumber evidence="1">3.4.24.-</ecNumber>
    </recommendedName>
</protein>
<keyword id="KW-0067">ATP-binding</keyword>
<keyword id="KW-0997">Cell inner membrane</keyword>
<keyword id="KW-1003">Cell membrane</keyword>
<keyword id="KW-0378">Hydrolase</keyword>
<keyword id="KW-0472">Membrane</keyword>
<keyword id="KW-0479">Metal-binding</keyword>
<keyword id="KW-0482">Metalloprotease</keyword>
<keyword id="KW-0547">Nucleotide-binding</keyword>
<keyword id="KW-0645">Protease</keyword>
<keyword id="KW-1185">Reference proteome</keyword>
<keyword id="KW-0812">Transmembrane</keyword>
<keyword id="KW-1133">Transmembrane helix</keyword>
<keyword id="KW-0862">Zinc</keyword>
<sequence>MSNTDPQPPQKLPLNWVVWTLAVALMLYYLPAMRDRPEPAIKLPYSEFRMLLREGQISSVTLRGSELDGKFITPRMFPEQRRQYSRFLTQLPDFGNEAILAELEEQNIPLEVKEGHDASSSKVILLSYLPWIMFMIILFWLSRRTFRNFSGRGGAFDFDKRLETQFECQKPDTTFDEVAGQTNAKREVQELVEYLRDPDRFHRVGALAPRGVLLMGPPGTGKTLLARALAGEAGVNFYPMSASEFIEVFVGVGASRVRQLFKIAKENSPSIIFIDELDSVGRTRGAGYGGGHDEREQTLNQILAEMDGFAGHDAVIVLAATNRPDVLDPALMRPGRFDRHVTLDLPDQEGRVAILKVHARHIPLADDVNLNQVAAGTPGFSGADLKNLINEAAIQAARENRDHVHSLDFDIARDKIIMGAERTLIIPPDEKHRLAVHESGHTLVAYYLPNTDPLYKVSIVPHGRSLGGTHQLPLQERHTYPEEYLRDKLAVMLAGRIAERELLGSVSTGADDDIHQATGLARAMVSRWGMSKEVGPVDLRDSEEHPFLGREMAQPHHHSEFSAEIIDKAVRELLVAAETTAADLISTHREKLDRLVALLERSETLHKAQIDECLQTGAS</sequence>